<organism>
    <name type="scientific">Arabidopsis thaliana</name>
    <name type="common">Mouse-ear cress</name>
    <dbReference type="NCBI Taxonomy" id="3702"/>
    <lineage>
        <taxon>Eukaryota</taxon>
        <taxon>Viridiplantae</taxon>
        <taxon>Streptophyta</taxon>
        <taxon>Embryophyta</taxon>
        <taxon>Tracheophyta</taxon>
        <taxon>Spermatophyta</taxon>
        <taxon>Magnoliopsida</taxon>
        <taxon>eudicotyledons</taxon>
        <taxon>Gunneridae</taxon>
        <taxon>Pentapetalae</taxon>
        <taxon>rosids</taxon>
        <taxon>malvids</taxon>
        <taxon>Brassicales</taxon>
        <taxon>Brassicaceae</taxon>
        <taxon>Camelineae</taxon>
        <taxon>Arabidopsis</taxon>
    </lineage>
</organism>
<evidence type="ECO:0000269" key="1">
    <source>
    </source>
</evidence>
<evidence type="ECO:0000269" key="2">
    <source>
    </source>
</evidence>
<evidence type="ECO:0000269" key="3">
    <source>
    </source>
</evidence>
<evidence type="ECO:0000269" key="4">
    <source>
    </source>
</evidence>
<evidence type="ECO:0000305" key="5"/>
<evidence type="ECO:0007829" key="6">
    <source>
        <dbReference type="PDB" id="7EU0"/>
    </source>
</evidence>
<evidence type="ECO:0007829" key="7">
    <source>
        <dbReference type="PDB" id="8XMD"/>
    </source>
</evidence>
<proteinExistence type="evidence at protein level"/>
<feature type="chain" id="PRO_0000423326" description="DNA-directed RNA polymerases II and IV subunit 5A">
    <location>
        <begin position="1"/>
        <end position="205"/>
    </location>
</feature>
<feature type="helix" evidence="6">
    <location>
        <begin position="4"/>
        <end position="24"/>
    </location>
</feature>
<feature type="helix" evidence="6">
    <location>
        <begin position="30"/>
        <end position="33"/>
    </location>
</feature>
<feature type="helix" evidence="6">
    <location>
        <begin position="37"/>
        <end position="41"/>
    </location>
</feature>
<feature type="turn" evidence="7">
    <location>
        <begin position="49"/>
        <end position="53"/>
    </location>
</feature>
<feature type="strand" evidence="6">
    <location>
        <begin position="55"/>
        <end position="58"/>
    </location>
</feature>
<feature type="strand" evidence="6">
    <location>
        <begin position="63"/>
        <end position="70"/>
    </location>
</feature>
<feature type="strand" evidence="6">
    <location>
        <begin position="73"/>
        <end position="76"/>
    </location>
</feature>
<feature type="helix" evidence="6">
    <location>
        <begin position="79"/>
        <end position="91"/>
    </location>
</feature>
<feature type="strand" evidence="6">
    <location>
        <begin position="96"/>
        <end position="103"/>
    </location>
</feature>
<feature type="turn" evidence="6">
    <location>
        <begin position="107"/>
        <end position="109"/>
    </location>
</feature>
<feature type="helix" evidence="6">
    <location>
        <begin position="112"/>
        <end position="115"/>
    </location>
</feature>
<feature type="turn" evidence="7">
    <location>
        <begin position="116"/>
        <end position="119"/>
    </location>
</feature>
<feature type="strand" evidence="6">
    <location>
        <begin position="121"/>
        <end position="126"/>
    </location>
</feature>
<feature type="turn" evidence="6">
    <location>
        <begin position="127"/>
        <end position="130"/>
    </location>
</feature>
<feature type="strand" evidence="6">
    <location>
        <begin position="134"/>
        <end position="140"/>
    </location>
</feature>
<feature type="strand" evidence="6">
    <location>
        <begin position="142"/>
        <end position="145"/>
    </location>
</feature>
<feature type="helix" evidence="6">
    <location>
        <begin position="148"/>
        <end position="158"/>
    </location>
</feature>
<feature type="strand" evidence="6">
    <location>
        <begin position="162"/>
        <end position="165"/>
    </location>
</feature>
<feature type="strand" evidence="6">
    <location>
        <begin position="167"/>
        <end position="169"/>
    </location>
</feature>
<feature type="helix" evidence="6">
    <location>
        <begin position="173"/>
        <end position="177"/>
    </location>
</feature>
<feature type="strand" evidence="6">
    <location>
        <begin position="185"/>
        <end position="190"/>
    </location>
</feature>
<feature type="strand" evidence="6">
    <location>
        <begin position="198"/>
        <end position="205"/>
    </location>
</feature>
<sequence length="205" mass="24301">MLTEEELKRLYRIQKTLMQMLRDRGYFIADSELTMTKQQFIRKHGDNMKREDLVTLKAKRNDNSDQLYIFFPDEAKVGVKTMKMYTNRMKSENVFRAILVVQQNLTPFARTCISEISSKFHLEVFQEAEMLVNIKEHVLVPEHQVLTTEEKKTLLERYTVKETQLPRIQVTDPIARYFGLKRGQVVKIIRPSETAGRYVTYRYVV</sequence>
<name>RPB5A_ARATH</name>
<comment type="function">
    <text evidence="2">DNA-dependent RNA polymerase catalyzes the transcription of DNA into RNA using the four ribonucleoside triphosphates as substrates. Component of RNA polymerase II which synthesizes mRNA precursors and many functional non-coding RNAs. Pol II is the central component of the basal RNA polymerase II transcription machinery. It is composed of mobile elements that move relative to each other. Component of RNA polymerase IV which mediates short-interfering RNAs (siRNA) accumulation and subsequent RNA-directed DNA methylation-dependent (RdDM) transcriptional gene silencing (TGS) of target sequences.</text>
</comment>
<comment type="subunit">
    <text evidence="2 4">Component of the RNA polymerases II and IV complexes. Interacts with NRPD1.</text>
</comment>
<comment type="subcellular location">
    <subcellularLocation>
        <location evidence="1">Nucleus</location>
    </subcellularLocation>
</comment>
<comment type="tissue specificity">
    <text evidence="3">Expressed in roots, leaves and seeds, and to a lower level, in flower buds, flowers and siliques.</text>
</comment>
<comment type="similarity">
    <text evidence="5">Belongs to the archaeal Rpo5/eukaryotic RPB5 RNA polymerase subunit family.</text>
</comment>
<keyword id="KW-0002">3D-structure</keyword>
<keyword id="KW-0240">DNA-directed RNA polymerase</keyword>
<keyword id="KW-0539">Nucleus</keyword>
<keyword id="KW-1185">Reference proteome</keyword>
<keyword id="KW-0804">Transcription</keyword>
<gene>
    <name type="primary">NRPB5A</name>
    <name type="synonym">NRPD5A</name>
    <name type="synonym">RPABC24.3</name>
    <name type="ordered locus">At3g22320</name>
    <name type="ORF">MCB17.4</name>
    <name type="ORF">MCB17_5</name>
</gene>
<dbReference type="EMBL" id="AF019248">
    <property type="protein sequence ID" value="AAC28253.1"/>
    <property type="molecule type" value="mRNA"/>
</dbReference>
<dbReference type="EMBL" id="AB022215">
    <property type="protein sequence ID" value="BAB01769.1"/>
    <property type="molecule type" value="Genomic_DNA"/>
</dbReference>
<dbReference type="EMBL" id="CP002686">
    <property type="protein sequence ID" value="AEE76621.1"/>
    <property type="molecule type" value="Genomic_DNA"/>
</dbReference>
<dbReference type="EMBL" id="AF370551">
    <property type="protein sequence ID" value="AAK48978.1"/>
    <property type="molecule type" value="mRNA"/>
</dbReference>
<dbReference type="EMBL" id="AF412101">
    <property type="protein sequence ID" value="AAL06554.1"/>
    <property type="molecule type" value="mRNA"/>
</dbReference>
<dbReference type="EMBL" id="AY086150">
    <property type="protein sequence ID" value="AAM63355.1"/>
    <property type="molecule type" value="mRNA"/>
</dbReference>
<dbReference type="EMBL" id="BT002130">
    <property type="protein sequence ID" value="AAN72141.1"/>
    <property type="molecule type" value="mRNA"/>
</dbReference>
<dbReference type="PIR" id="T51950">
    <property type="entry name" value="T51950"/>
</dbReference>
<dbReference type="PDB" id="7EU0">
    <property type="method" value="EM"/>
    <property type="resolution" value="3.16 A"/>
    <property type="chains" value="E=1-205"/>
</dbReference>
<dbReference type="PDB" id="7EU1">
    <property type="method" value="EM"/>
    <property type="resolution" value="3.86 A"/>
    <property type="chains" value="E=1-205"/>
</dbReference>
<dbReference type="PDB" id="8XMB">
    <property type="method" value="EM"/>
    <property type="resolution" value="3.40 A"/>
    <property type="chains" value="E=1-205"/>
</dbReference>
<dbReference type="PDB" id="8XMC">
    <property type="method" value="EM"/>
    <property type="resolution" value="3.10 A"/>
    <property type="chains" value="E=1-205"/>
</dbReference>
<dbReference type="PDB" id="8XMD">
    <property type="method" value="EM"/>
    <property type="resolution" value="3.40 A"/>
    <property type="chains" value="E=1-205"/>
</dbReference>
<dbReference type="PDB" id="8XME">
    <property type="method" value="EM"/>
    <property type="resolution" value="3.10 A"/>
    <property type="chains" value="E=1-205"/>
</dbReference>
<dbReference type="PDBsum" id="7EU0"/>
<dbReference type="PDBsum" id="7EU1"/>
<dbReference type="PDBsum" id="8XMB"/>
<dbReference type="PDBsum" id="8XMC"/>
<dbReference type="PDBsum" id="8XMD"/>
<dbReference type="PDBsum" id="8XME"/>
<dbReference type="EMDB" id="EMD-31305"/>
<dbReference type="EMDB" id="EMD-31306"/>
<dbReference type="EMDB" id="EMD-38470"/>
<dbReference type="EMDB" id="EMD-38471"/>
<dbReference type="EMDB" id="EMD-38472"/>
<dbReference type="EMDB" id="EMD-38473"/>
<dbReference type="SMR" id="O81098"/>
<dbReference type="BioGRID" id="7133">
    <property type="interactions" value="58"/>
</dbReference>
<dbReference type="DIP" id="DIP-48677N"/>
<dbReference type="FunCoup" id="O81098">
    <property type="interactions" value="4532"/>
</dbReference>
<dbReference type="IntAct" id="O81098">
    <property type="interactions" value="3"/>
</dbReference>
<dbReference type="STRING" id="3702.O81098"/>
<dbReference type="PaxDb" id="3702-AT3G22320.1"/>
<dbReference type="ProteomicsDB" id="227958"/>
<dbReference type="EnsemblPlants" id="AT3G22320.1">
    <property type="protein sequence ID" value="AT3G22320.1"/>
    <property type="gene ID" value="AT3G22320"/>
</dbReference>
<dbReference type="Gramene" id="AT3G22320.1">
    <property type="protein sequence ID" value="AT3G22320.1"/>
    <property type="gene ID" value="AT3G22320"/>
</dbReference>
<dbReference type="KEGG" id="ath:AT3G22320"/>
<dbReference type="Araport" id="AT3G22320"/>
<dbReference type="TAIR" id="AT3G22320">
    <property type="gene designation" value="NRPB5"/>
</dbReference>
<dbReference type="eggNOG" id="KOG3218">
    <property type="taxonomic scope" value="Eukaryota"/>
</dbReference>
<dbReference type="HOGENOM" id="CLU_058320_0_1_1"/>
<dbReference type="InParanoid" id="O81098"/>
<dbReference type="OMA" id="TERMEDH"/>
<dbReference type="OrthoDB" id="248779at2759"/>
<dbReference type="PhylomeDB" id="O81098"/>
<dbReference type="CD-CODE" id="4299E36E">
    <property type="entry name" value="Nucleolus"/>
</dbReference>
<dbReference type="PRO" id="PR:O81098"/>
<dbReference type="Proteomes" id="UP000006548">
    <property type="component" value="Chromosome 3"/>
</dbReference>
<dbReference type="ExpressionAtlas" id="O81098">
    <property type="expression patterns" value="baseline and differential"/>
</dbReference>
<dbReference type="GO" id="GO:0005665">
    <property type="term" value="C:RNA polymerase II, core complex"/>
    <property type="evidence" value="ECO:0000314"/>
    <property type="project" value="UniProtKB"/>
</dbReference>
<dbReference type="GO" id="GO:0000418">
    <property type="term" value="C:RNA polymerase IV complex"/>
    <property type="evidence" value="ECO:0000314"/>
    <property type="project" value="UniProtKB"/>
</dbReference>
<dbReference type="GO" id="GO:0003677">
    <property type="term" value="F:DNA binding"/>
    <property type="evidence" value="ECO:0007669"/>
    <property type="project" value="InterPro"/>
</dbReference>
<dbReference type="GO" id="GO:0003899">
    <property type="term" value="F:DNA-directed RNA polymerase activity"/>
    <property type="evidence" value="ECO:0007669"/>
    <property type="project" value="InterPro"/>
</dbReference>
<dbReference type="GO" id="GO:0006351">
    <property type="term" value="P:DNA-templated transcription"/>
    <property type="evidence" value="ECO:0007669"/>
    <property type="project" value="InterPro"/>
</dbReference>
<dbReference type="FunFam" id="3.40.1340.10:FF:000001">
    <property type="entry name" value="DNA-directed RNA polymerases I, II, and III subunit RPABC1"/>
    <property type="match status" value="1"/>
</dbReference>
<dbReference type="FunFam" id="3.90.940.20:FF:000001">
    <property type="entry name" value="DNA-directed RNA polymerases I, II, and III subunit RPABC1"/>
    <property type="match status" value="1"/>
</dbReference>
<dbReference type="Gene3D" id="3.40.1340.10">
    <property type="entry name" value="RNA polymerase, Rpb5, N-terminal domain"/>
    <property type="match status" value="1"/>
</dbReference>
<dbReference type="Gene3D" id="3.90.940.20">
    <property type="entry name" value="RPB5-like RNA polymerase subunit"/>
    <property type="match status" value="1"/>
</dbReference>
<dbReference type="HAMAP" id="MF_00025">
    <property type="entry name" value="RNApol_Rpo5_RPB5"/>
    <property type="match status" value="1"/>
</dbReference>
<dbReference type="InterPro" id="IPR014381">
    <property type="entry name" value="Arch_Rpo5/euc_Rpb5"/>
</dbReference>
<dbReference type="InterPro" id="IPR005571">
    <property type="entry name" value="RNA_pol_Rpb5_N"/>
</dbReference>
<dbReference type="InterPro" id="IPR036710">
    <property type="entry name" value="RNA_pol_Rpb5_N_sf"/>
</dbReference>
<dbReference type="InterPro" id="IPR000783">
    <property type="entry name" value="RNA_pol_subH/Rpb5_C"/>
</dbReference>
<dbReference type="InterPro" id="IPR020608">
    <property type="entry name" value="RNA_pol_subH/Rpb5_CS"/>
</dbReference>
<dbReference type="InterPro" id="IPR035913">
    <property type="entry name" value="RPB5-like_sf"/>
</dbReference>
<dbReference type="NCBIfam" id="NF007129">
    <property type="entry name" value="PRK09570.1"/>
    <property type="match status" value="1"/>
</dbReference>
<dbReference type="PANTHER" id="PTHR10535">
    <property type="entry name" value="DNA-DIRECTED RNA POLYMERASES I, II, AND III SUBUNIT RPABC1"/>
    <property type="match status" value="1"/>
</dbReference>
<dbReference type="PANTHER" id="PTHR10535:SF0">
    <property type="entry name" value="DNA-DIRECTED RNA POLYMERASES I, II, AND III SUBUNIT RPABC1"/>
    <property type="match status" value="1"/>
</dbReference>
<dbReference type="Pfam" id="PF01191">
    <property type="entry name" value="RNA_pol_Rpb5_C"/>
    <property type="match status" value="1"/>
</dbReference>
<dbReference type="Pfam" id="PF03871">
    <property type="entry name" value="RNA_pol_Rpb5_N"/>
    <property type="match status" value="1"/>
</dbReference>
<dbReference type="PIRSF" id="PIRSF000747">
    <property type="entry name" value="RPB5"/>
    <property type="match status" value="1"/>
</dbReference>
<dbReference type="SUPFAM" id="SSF53036">
    <property type="entry name" value="Eukaryotic RPB5 N-terminal domain"/>
    <property type="match status" value="1"/>
</dbReference>
<dbReference type="SUPFAM" id="SSF55287">
    <property type="entry name" value="RPB5-like RNA polymerase subunit"/>
    <property type="match status" value="1"/>
</dbReference>
<dbReference type="PROSITE" id="PS01110">
    <property type="entry name" value="RNA_POL_H_23KD"/>
    <property type="match status" value="1"/>
</dbReference>
<protein>
    <recommendedName>
        <fullName>DNA-directed RNA polymerases II and IV subunit 5A</fullName>
        <shortName>RPB5a</shortName>
    </recommendedName>
    <alternativeName>
        <fullName>DNA-directed RNA polymerase II subunit E</fullName>
    </alternativeName>
    <alternativeName>
        <fullName>RNA polymerase I, II and III 24.3 kDa subunit</fullName>
        <shortName>AtRPB24.3</shortName>
    </alternativeName>
</protein>
<accession>O81098</accession>
<reference key="1">
    <citation type="journal article" date="1999" name="Gene">
        <title>Arabidopsis thaliana RNA polymerase II subunits related to yeast and human RPB5.</title>
        <authorList>
            <person name="Larkin R.M."/>
            <person name="Hagen G."/>
            <person name="Guilfoyle T.J."/>
        </authorList>
    </citation>
    <scope>NUCLEOTIDE SEQUENCE [MRNA]</scope>
    <scope>SUBCELLULAR LOCATION</scope>
    <source>
        <strain>cv. Columbia</strain>
    </source>
</reference>
<reference key="2">
    <citation type="journal article" date="2000" name="DNA Res.">
        <title>Structural analysis of Arabidopsis thaliana chromosome 3. I. Sequence features of the regions of 4,504,864 bp covered by sixty P1 and TAC clones.</title>
        <authorList>
            <person name="Sato S."/>
            <person name="Nakamura Y."/>
            <person name="Kaneko T."/>
            <person name="Katoh T."/>
            <person name="Asamizu E."/>
            <person name="Tabata S."/>
        </authorList>
    </citation>
    <scope>NUCLEOTIDE SEQUENCE [LARGE SCALE GENOMIC DNA]</scope>
    <source>
        <strain>cv. Columbia</strain>
    </source>
</reference>
<reference key="3">
    <citation type="journal article" date="2017" name="Plant J.">
        <title>Araport11: a complete reannotation of the Arabidopsis thaliana reference genome.</title>
        <authorList>
            <person name="Cheng C.Y."/>
            <person name="Krishnakumar V."/>
            <person name="Chan A.P."/>
            <person name="Thibaud-Nissen F."/>
            <person name="Schobel S."/>
            <person name="Town C.D."/>
        </authorList>
    </citation>
    <scope>GENOME REANNOTATION</scope>
    <source>
        <strain>cv. Columbia</strain>
    </source>
</reference>
<reference key="4">
    <citation type="journal article" date="2003" name="Science">
        <title>Empirical analysis of transcriptional activity in the Arabidopsis genome.</title>
        <authorList>
            <person name="Yamada K."/>
            <person name="Lim J."/>
            <person name="Dale J.M."/>
            <person name="Chen H."/>
            <person name="Shinn P."/>
            <person name="Palm C.J."/>
            <person name="Southwick A.M."/>
            <person name="Wu H.C."/>
            <person name="Kim C.J."/>
            <person name="Nguyen M."/>
            <person name="Pham P.K."/>
            <person name="Cheuk R.F."/>
            <person name="Karlin-Newmann G."/>
            <person name="Liu S.X."/>
            <person name="Lam B."/>
            <person name="Sakano H."/>
            <person name="Wu T."/>
            <person name="Yu G."/>
            <person name="Miranda M."/>
            <person name="Quach H.L."/>
            <person name="Tripp M."/>
            <person name="Chang C.H."/>
            <person name="Lee J.M."/>
            <person name="Toriumi M.J."/>
            <person name="Chan M.M."/>
            <person name="Tang C.C."/>
            <person name="Onodera C.S."/>
            <person name="Deng J.M."/>
            <person name="Akiyama K."/>
            <person name="Ansari Y."/>
            <person name="Arakawa T."/>
            <person name="Banh J."/>
            <person name="Banno F."/>
            <person name="Bowser L."/>
            <person name="Brooks S.Y."/>
            <person name="Carninci P."/>
            <person name="Chao Q."/>
            <person name="Choy N."/>
            <person name="Enju A."/>
            <person name="Goldsmith A.D."/>
            <person name="Gurjal M."/>
            <person name="Hansen N.F."/>
            <person name="Hayashizaki Y."/>
            <person name="Johnson-Hopson C."/>
            <person name="Hsuan V.W."/>
            <person name="Iida K."/>
            <person name="Karnes M."/>
            <person name="Khan S."/>
            <person name="Koesema E."/>
            <person name="Ishida J."/>
            <person name="Jiang P.X."/>
            <person name="Jones T."/>
            <person name="Kawai J."/>
            <person name="Kamiya A."/>
            <person name="Meyers C."/>
            <person name="Nakajima M."/>
            <person name="Narusaka M."/>
            <person name="Seki M."/>
            <person name="Sakurai T."/>
            <person name="Satou M."/>
            <person name="Tamse R."/>
            <person name="Vaysberg M."/>
            <person name="Wallender E.K."/>
            <person name="Wong C."/>
            <person name="Yamamura Y."/>
            <person name="Yuan S."/>
            <person name="Shinozaki K."/>
            <person name="Davis R.W."/>
            <person name="Theologis A."/>
            <person name="Ecker J.R."/>
        </authorList>
    </citation>
    <scope>NUCLEOTIDE SEQUENCE [LARGE SCALE MRNA]</scope>
    <source>
        <strain>cv. Columbia</strain>
    </source>
</reference>
<reference key="5">
    <citation type="submission" date="2002-03" db="EMBL/GenBank/DDBJ databases">
        <title>Full-length cDNA from Arabidopsis thaliana.</title>
        <authorList>
            <person name="Brover V.V."/>
            <person name="Troukhan M.E."/>
            <person name="Alexandrov N.A."/>
            <person name="Lu Y.-P."/>
            <person name="Flavell R.B."/>
            <person name="Feldmann K.A."/>
        </authorList>
    </citation>
    <scope>NUCLEOTIDE SEQUENCE [LARGE SCALE MRNA]</scope>
</reference>
<reference key="6">
    <citation type="journal article" date="2009" name="Mol. Cell">
        <title>Subunit compositions of the RNA-silencing enzymes Pol IV and Pol V reveal their origins as specialized forms of RNA polymerase II.</title>
        <authorList>
            <person name="Ream T.S."/>
            <person name="Haag J.R."/>
            <person name="Wierzbicki A.T."/>
            <person name="Nicora C.D."/>
            <person name="Norbeck A.D."/>
            <person name="Zhu J.K."/>
            <person name="Hagen G."/>
            <person name="Guilfoyle T.J."/>
            <person name="Pasa-Tolic L."/>
            <person name="Pikaard C.S."/>
        </authorList>
    </citation>
    <scope>FUNCTION</scope>
    <scope>IDENTIFICATION BY MASS SPECTROMETRY</scope>
    <scope>SUBUNIT</scope>
    <scope>NOMENCLATURE</scope>
</reference>
<reference key="7">
    <citation type="journal article" date="2009" name="Proc. Natl. Acad. Sci. U.S.A.">
        <title>PolV(PolIVb) function in RNA-directed DNA methylation requires the conserved active site and an additional plant-specific subunit.</title>
        <authorList>
            <person name="Lahmy S."/>
            <person name="Pontier D."/>
            <person name="Cavel E."/>
            <person name="Vega D."/>
            <person name="El-Shami M."/>
            <person name="Kanno T."/>
            <person name="Lagrange T."/>
        </authorList>
    </citation>
    <scope>TISSUE SPECIFICITY</scope>
</reference>
<reference key="8">
    <citation type="journal article" date="2011" name="PLoS Genet.">
        <title>SHH1, a homeodomain protein required for DNA methylation, as well as RDR2, RDM4, and chromatin remodeling factors, associate with RNA polymerase IV.</title>
        <authorList>
            <person name="Law J.A."/>
            <person name="Vashisht A.A."/>
            <person name="Wohlschlegel J.A."/>
            <person name="Jacobsen S.E."/>
        </authorList>
    </citation>
    <scope>IDENTIFICATION BY MASS SPECTROMETRY</scope>
    <scope>INTERACTION WITH NRPD1</scope>
    <scope>SUBUNIT</scope>
</reference>